<proteinExistence type="inferred from homology"/>
<gene>
    <name evidence="1" type="primary">ispF</name>
    <name type="ordered locus">TC_0718</name>
</gene>
<name>ISPF_CHLMU</name>
<dbReference type="EC" id="4.6.1.12" evidence="1"/>
<dbReference type="EMBL" id="AE002160">
    <property type="protein sequence ID" value="AAF39530.1"/>
    <property type="molecule type" value="Genomic_DNA"/>
</dbReference>
<dbReference type="PIR" id="E81672">
    <property type="entry name" value="E81672"/>
</dbReference>
<dbReference type="RefSeq" id="WP_010231311.1">
    <property type="nucleotide sequence ID" value="NZ_CP063055.1"/>
</dbReference>
<dbReference type="SMR" id="Q9PJV8"/>
<dbReference type="GeneID" id="1246081"/>
<dbReference type="KEGG" id="cmu:TC_0718"/>
<dbReference type="eggNOG" id="COG0245">
    <property type="taxonomic scope" value="Bacteria"/>
</dbReference>
<dbReference type="HOGENOM" id="CLU_084630_2_0_0"/>
<dbReference type="OrthoDB" id="9804336at2"/>
<dbReference type="UniPathway" id="UPA00056">
    <property type="reaction ID" value="UER00095"/>
</dbReference>
<dbReference type="Proteomes" id="UP000000800">
    <property type="component" value="Chromosome"/>
</dbReference>
<dbReference type="GO" id="GO:0008685">
    <property type="term" value="F:2-C-methyl-D-erythritol 2,4-cyclodiphosphate synthase activity"/>
    <property type="evidence" value="ECO:0007669"/>
    <property type="project" value="UniProtKB-UniRule"/>
</dbReference>
<dbReference type="GO" id="GO:0046872">
    <property type="term" value="F:metal ion binding"/>
    <property type="evidence" value="ECO:0007669"/>
    <property type="project" value="UniProtKB-KW"/>
</dbReference>
<dbReference type="GO" id="GO:0019288">
    <property type="term" value="P:isopentenyl diphosphate biosynthetic process, methylerythritol 4-phosphate pathway"/>
    <property type="evidence" value="ECO:0007669"/>
    <property type="project" value="UniProtKB-UniRule"/>
</dbReference>
<dbReference type="GO" id="GO:0016114">
    <property type="term" value="P:terpenoid biosynthetic process"/>
    <property type="evidence" value="ECO:0007669"/>
    <property type="project" value="InterPro"/>
</dbReference>
<dbReference type="CDD" id="cd00554">
    <property type="entry name" value="MECDP_synthase"/>
    <property type="match status" value="1"/>
</dbReference>
<dbReference type="Gene3D" id="3.30.1330.50">
    <property type="entry name" value="2-C-methyl-D-erythritol 2,4-cyclodiphosphate synthase"/>
    <property type="match status" value="1"/>
</dbReference>
<dbReference type="HAMAP" id="MF_00107">
    <property type="entry name" value="IspF"/>
    <property type="match status" value="1"/>
</dbReference>
<dbReference type="InterPro" id="IPR003526">
    <property type="entry name" value="MECDP_synthase"/>
</dbReference>
<dbReference type="InterPro" id="IPR020555">
    <property type="entry name" value="MECDP_synthase_CS"/>
</dbReference>
<dbReference type="InterPro" id="IPR036571">
    <property type="entry name" value="MECDP_synthase_sf"/>
</dbReference>
<dbReference type="NCBIfam" id="TIGR00151">
    <property type="entry name" value="ispF"/>
    <property type="match status" value="1"/>
</dbReference>
<dbReference type="PANTHER" id="PTHR43181">
    <property type="entry name" value="2-C-METHYL-D-ERYTHRITOL 2,4-CYCLODIPHOSPHATE SYNTHASE, CHLOROPLASTIC"/>
    <property type="match status" value="1"/>
</dbReference>
<dbReference type="PANTHER" id="PTHR43181:SF1">
    <property type="entry name" value="2-C-METHYL-D-ERYTHRITOL 2,4-CYCLODIPHOSPHATE SYNTHASE, CHLOROPLASTIC"/>
    <property type="match status" value="1"/>
</dbReference>
<dbReference type="Pfam" id="PF02542">
    <property type="entry name" value="YgbB"/>
    <property type="match status" value="1"/>
</dbReference>
<dbReference type="SUPFAM" id="SSF69765">
    <property type="entry name" value="IpsF-like"/>
    <property type="match status" value="1"/>
</dbReference>
<dbReference type="PROSITE" id="PS01350">
    <property type="entry name" value="ISPF"/>
    <property type="match status" value="1"/>
</dbReference>
<accession>Q9PJV8</accession>
<sequence length="178" mass="19185">MSEPSSCFVLPDPEWIYRVGIGQDSHRFLPSDNPKPCVLGGIIFENTPGFEANSDGDVVFHAICNAFSSVTHQVILGALADELLKAKGISDSAVYLKEAVASLKPTQKISHLAITIEGQRPKLLPKISAMREKIAEILRISLDSVNITATSGEGLTSMGQGHGVQCFCVLTVMEFCPR</sequence>
<comment type="function">
    <text evidence="1">Involved in the biosynthesis of isopentenyl diphosphate (IPP) and dimethylallyl diphosphate (DMAPP), two major building blocks of isoprenoid compounds. Catalyzes the conversion of 4-diphosphocytidyl-2-C-methyl-D-erythritol 2-phosphate (CDP-ME2P) to 2-C-methyl-D-erythritol 2,4-cyclodiphosphate (ME-CPP) with a corresponding release of cytidine 5-monophosphate (CMP).</text>
</comment>
<comment type="catalytic activity">
    <reaction evidence="1">
        <text>4-CDP-2-C-methyl-D-erythritol 2-phosphate = 2-C-methyl-D-erythritol 2,4-cyclic diphosphate + CMP</text>
        <dbReference type="Rhea" id="RHEA:23864"/>
        <dbReference type="ChEBI" id="CHEBI:57919"/>
        <dbReference type="ChEBI" id="CHEBI:58483"/>
        <dbReference type="ChEBI" id="CHEBI:60377"/>
        <dbReference type="EC" id="4.6.1.12"/>
    </reaction>
</comment>
<comment type="cofactor">
    <cofactor evidence="1">
        <name>a divalent metal cation</name>
        <dbReference type="ChEBI" id="CHEBI:60240"/>
    </cofactor>
    <text evidence="1">Binds 1 divalent metal cation per subunit.</text>
</comment>
<comment type="pathway">
    <text evidence="1">Isoprenoid biosynthesis; isopentenyl diphosphate biosynthesis via DXP pathway; isopentenyl diphosphate from 1-deoxy-D-xylulose 5-phosphate: step 4/6.</text>
</comment>
<comment type="subunit">
    <text evidence="1">Homotrimer.</text>
</comment>
<comment type="similarity">
    <text evidence="1">Belongs to the IspF family.</text>
</comment>
<organism>
    <name type="scientific">Chlamydia muridarum (strain MoPn / Nigg)</name>
    <dbReference type="NCBI Taxonomy" id="243161"/>
    <lineage>
        <taxon>Bacteria</taxon>
        <taxon>Pseudomonadati</taxon>
        <taxon>Chlamydiota</taxon>
        <taxon>Chlamydiia</taxon>
        <taxon>Chlamydiales</taxon>
        <taxon>Chlamydiaceae</taxon>
        <taxon>Chlamydia/Chlamydophila group</taxon>
        <taxon>Chlamydia</taxon>
    </lineage>
</organism>
<protein>
    <recommendedName>
        <fullName evidence="1">2-C-methyl-D-erythritol 2,4-cyclodiphosphate synthase</fullName>
        <shortName evidence="1">MECDP-synthase</shortName>
        <shortName evidence="1">MECPP-synthase</shortName>
        <shortName evidence="1">MECPS</shortName>
        <ecNumber evidence="1">4.6.1.12</ecNumber>
    </recommendedName>
</protein>
<keyword id="KW-0414">Isoprene biosynthesis</keyword>
<keyword id="KW-0456">Lyase</keyword>
<keyword id="KW-0479">Metal-binding</keyword>
<evidence type="ECO:0000255" key="1">
    <source>
        <dbReference type="HAMAP-Rule" id="MF_00107"/>
    </source>
</evidence>
<feature type="chain" id="PRO_0000189452" description="2-C-methyl-D-erythritol 2,4-cyclodiphosphate synthase">
    <location>
        <begin position="1"/>
        <end position="178"/>
    </location>
</feature>
<feature type="binding site" evidence="1">
    <location>
        <begin position="24"/>
        <end position="26"/>
    </location>
    <ligand>
        <name>4-CDP-2-C-methyl-D-erythritol 2-phosphate</name>
        <dbReference type="ChEBI" id="CHEBI:57919"/>
    </ligand>
</feature>
<feature type="binding site" evidence="1">
    <location>
        <position position="24"/>
    </location>
    <ligand>
        <name>a divalent metal cation</name>
        <dbReference type="ChEBI" id="CHEBI:60240"/>
    </ligand>
</feature>
<feature type="binding site" evidence="1">
    <location>
        <position position="26"/>
    </location>
    <ligand>
        <name>a divalent metal cation</name>
        <dbReference type="ChEBI" id="CHEBI:60240"/>
    </ligand>
</feature>
<feature type="binding site" evidence="1">
    <location>
        <position position="61"/>
    </location>
    <ligand>
        <name>a divalent metal cation</name>
        <dbReference type="ChEBI" id="CHEBI:60240"/>
    </ligand>
</feature>
<feature type="binding site" evidence="1">
    <location>
        <begin position="150"/>
        <end position="153"/>
    </location>
    <ligand>
        <name>4-CDP-2-C-methyl-D-erythritol 2-phosphate</name>
        <dbReference type="ChEBI" id="CHEBI:57919"/>
    </ligand>
</feature>
<feature type="site" description="Transition state stabilizer" evidence="1">
    <location>
        <position position="53"/>
    </location>
</feature>
<feature type="site" description="Transition state stabilizer" evidence="1">
    <location>
        <position position="151"/>
    </location>
</feature>
<reference key="1">
    <citation type="journal article" date="2000" name="Nucleic Acids Res.">
        <title>Genome sequences of Chlamydia trachomatis MoPn and Chlamydia pneumoniae AR39.</title>
        <authorList>
            <person name="Read T.D."/>
            <person name="Brunham R.C."/>
            <person name="Shen C."/>
            <person name="Gill S.R."/>
            <person name="Heidelberg J.F."/>
            <person name="White O."/>
            <person name="Hickey E.K."/>
            <person name="Peterson J.D."/>
            <person name="Utterback T.R."/>
            <person name="Berry K.J."/>
            <person name="Bass S."/>
            <person name="Linher K.D."/>
            <person name="Weidman J.F."/>
            <person name="Khouri H.M."/>
            <person name="Craven B."/>
            <person name="Bowman C."/>
            <person name="Dodson R.J."/>
            <person name="Gwinn M.L."/>
            <person name="Nelson W.C."/>
            <person name="DeBoy R.T."/>
            <person name="Kolonay J.F."/>
            <person name="McClarty G."/>
            <person name="Salzberg S.L."/>
            <person name="Eisen J.A."/>
            <person name="Fraser C.M."/>
        </authorList>
    </citation>
    <scope>NUCLEOTIDE SEQUENCE [LARGE SCALE GENOMIC DNA]</scope>
    <source>
        <strain>MoPn / Nigg</strain>
    </source>
</reference>